<organism>
    <name type="scientific">Bothrops fonsecai</name>
    <name type="common">Fonseca's lancehead</name>
    <name type="synonym">Rhinocerophis fonsecai</name>
    <dbReference type="NCBI Taxonomy" id="157549"/>
    <lineage>
        <taxon>Eukaryota</taxon>
        <taxon>Metazoa</taxon>
        <taxon>Chordata</taxon>
        <taxon>Craniata</taxon>
        <taxon>Vertebrata</taxon>
        <taxon>Euteleostomi</taxon>
        <taxon>Lepidosauria</taxon>
        <taxon>Squamata</taxon>
        <taxon>Bifurcata</taxon>
        <taxon>Unidentata</taxon>
        <taxon>Episquamata</taxon>
        <taxon>Toxicofera</taxon>
        <taxon>Serpentes</taxon>
        <taxon>Colubroidea</taxon>
        <taxon>Viperidae</taxon>
        <taxon>Crotalinae</taxon>
        <taxon>Bothrops</taxon>
    </lineage>
</organism>
<keyword id="KW-0903">Direct protein sequencing</keyword>
<keyword id="KW-0382">Hypotensive agent</keyword>
<keyword id="KW-0481">Metalloenzyme inhibitor</keyword>
<keyword id="KW-0483">Metalloprotease inhibitor</keyword>
<keyword id="KW-0646">Protease inhibitor</keyword>
<keyword id="KW-0873">Pyrrolidone carboxylic acid</keyword>
<keyword id="KW-0964">Secreted</keyword>
<keyword id="KW-0800">Toxin</keyword>
<dbReference type="GO" id="GO:0005576">
    <property type="term" value="C:extracellular region"/>
    <property type="evidence" value="ECO:0007669"/>
    <property type="project" value="UniProtKB-SubCell"/>
</dbReference>
<dbReference type="GO" id="GO:0030414">
    <property type="term" value="F:peptidase inhibitor activity"/>
    <property type="evidence" value="ECO:0007669"/>
    <property type="project" value="UniProtKB-KW"/>
</dbReference>
<dbReference type="GO" id="GO:0090729">
    <property type="term" value="F:toxin activity"/>
    <property type="evidence" value="ECO:0007669"/>
    <property type="project" value="UniProtKB-KW"/>
</dbReference>
<dbReference type="GO" id="GO:0008217">
    <property type="term" value="P:regulation of blood pressure"/>
    <property type="evidence" value="ECO:0007669"/>
    <property type="project" value="UniProtKB-KW"/>
</dbReference>
<reference key="1">
    <citation type="journal article" date="2012" name="Mol. Cell. Proteomics">
        <title>Peptidomics of three Bothrops snake venoms: insights into the molecular diversification of proteomes and peptidomes.</title>
        <authorList>
            <person name="Tashima A.K."/>
            <person name="Zelanis A."/>
            <person name="Kitano E.S."/>
            <person name="Ianzer D."/>
            <person name="Melo R.L."/>
            <person name="Rioli V."/>
            <person name="Sant'anna S.S."/>
            <person name="Schenberg A.C."/>
            <person name="Camargo A.C."/>
            <person name="Serrano S.M.T."/>
        </authorList>
    </citation>
    <scope>PROTEIN SEQUENCE</scope>
    <scope>FUNCTION</scope>
    <scope>PYROGLUTAMATE FORMATION AT GLN-1</scope>
    <scope>MASS SPECTROMETRY</scope>
    <source>
        <tissue>Venom</tissue>
    </source>
</reference>
<evidence type="ECO:0000269" key="1">
    <source>
    </source>
</evidence>
<evidence type="ECO:0000305" key="2"/>
<feature type="peptide" id="PRO_0000421909" description="Bradykinin-potentiating peptide 7c">
    <location>
        <begin position="1"/>
        <end position="7"/>
    </location>
</feature>
<feature type="modified residue" description="Pyrrolidone carboxylic acid" evidence="1">
    <location>
        <position position="1"/>
    </location>
</feature>
<feature type="unsure residue" description="K or Q">
    <location>
        <position position="7"/>
    </location>
</feature>
<sequence>QRWPSPK</sequence>
<comment type="function">
    <text evidence="1">This peptide both inhibits the activity of the angiotensin-converting enzyme (ACE) and enhances the action of bradykinin by inhibiting the peptidases that inactivate it. It acts as an indirect hypotensive agent.</text>
</comment>
<comment type="subcellular location">
    <subcellularLocation>
        <location>Secreted</location>
    </subcellularLocation>
</comment>
<comment type="tissue specificity">
    <text>Expressed by the venom gland.</text>
</comment>
<comment type="mass spectrometry"/>
<comment type="similarity">
    <text evidence="2">Belongs to the bradykinin-potentiating peptide family.</text>
</comment>
<protein>
    <recommendedName>
        <fullName>Bradykinin-potentiating peptide 7c</fullName>
        <shortName>BPP-7c</shortName>
    </recommendedName>
</protein>
<name>BPP7C_BOTFO</name>
<accession>P0DKZ8</accession>
<proteinExistence type="evidence at protein level"/>